<name>CM3J_CONRE</name>
<comment type="subcellular location">
    <subcellularLocation>
        <location evidence="2">Secreted</location>
    </subcellularLocation>
</comment>
<comment type="tissue specificity">
    <text evidence="5">Expressed by the venom duct.</text>
</comment>
<comment type="domain">
    <text evidence="4">The cysteine framework is III (CC-C-C-CC). Classified in the M-1 branch, since 1 residue stands between the fourth and the fifth cysteine residues.</text>
</comment>
<comment type="mass spectrometry"/>
<comment type="similarity">
    <text evidence="4">Belongs to the conotoxin M superfamily.</text>
</comment>
<comment type="caution">
    <text evidence="4">Experimental mass obtained by mass spectrometry (2145.0 Da) is very different from the calculated average mass 1817.18, even with consideration of post-translational modifications.</text>
</comment>
<feature type="peptide" id="PRO_0000444767" description="Conotoxin reg3j" evidence="2">
    <location>
        <begin position="1"/>
        <end position="17"/>
    </location>
</feature>
<feature type="modified residue" description="4-hydroxyproline" evidence="2">
    <location>
        <position position="5"/>
    </location>
</feature>
<feature type="disulfide bond" evidence="1">
    <location>
        <begin position="2"/>
        <end position="16"/>
    </location>
</feature>
<feature type="disulfide bond" evidence="1">
    <location>
        <begin position="3"/>
        <end position="14"/>
    </location>
</feature>
<feature type="disulfide bond" evidence="1">
    <location>
        <begin position="8"/>
        <end position="17"/>
    </location>
</feature>
<dbReference type="GO" id="GO:0005576">
    <property type="term" value="C:extracellular region"/>
    <property type="evidence" value="ECO:0007669"/>
    <property type="project" value="UniProtKB-SubCell"/>
</dbReference>
<dbReference type="GO" id="GO:0090729">
    <property type="term" value="F:toxin activity"/>
    <property type="evidence" value="ECO:0007669"/>
    <property type="project" value="UniProtKB-KW"/>
</dbReference>
<evidence type="ECO:0000250" key="1">
    <source>
        <dbReference type="UniProtKB" id="Q5EHP3"/>
    </source>
</evidence>
<evidence type="ECO:0000269" key="2">
    <source>
    </source>
</evidence>
<evidence type="ECO:0000303" key="3">
    <source>
    </source>
</evidence>
<evidence type="ECO:0000305" key="4"/>
<evidence type="ECO:0000305" key="5">
    <source>
    </source>
</evidence>
<sequence>GCCSPWNCIQLRACGCC</sequence>
<accession>P0DPJ7</accession>
<keyword id="KW-0903">Direct protein sequencing</keyword>
<keyword id="KW-1015">Disulfide bond</keyword>
<keyword id="KW-0379">Hydroxylation</keyword>
<keyword id="KW-0964">Secreted</keyword>
<keyword id="KW-0800">Toxin</keyword>
<proteinExistence type="evidence at protein level"/>
<protein>
    <recommendedName>
        <fullName evidence="3">Conotoxin reg3j</fullName>
    </recommendedName>
</protein>
<reference key="1">
    <citation type="journal article" date="2017" name="FEBS J.">
        <title>Structural plasticity of Mini-M conotoxins: expression of all mini-M subtypes by Conus regius.</title>
        <authorList>
            <person name="Franco A."/>
            <person name="Dovell S."/>
            <person name="Moller C."/>
            <person name="Grandal M."/>
            <person name="Clark E."/>
            <person name="Mari F."/>
        </authorList>
    </citation>
    <scope>PROTEIN SEQUENCE</scope>
    <scope>MASS SPECTROMETRY</scope>
    <scope>SUBCELLULAR LOCATION</scope>
    <scope>HYDROXYLATION AT PRO-5</scope>
    <source>
        <tissue>Venom</tissue>
    </source>
</reference>
<organism>
    <name type="scientific">Conus regius</name>
    <name type="common">Crown cone</name>
    <dbReference type="NCBI Taxonomy" id="101314"/>
    <lineage>
        <taxon>Eukaryota</taxon>
        <taxon>Metazoa</taxon>
        <taxon>Spiralia</taxon>
        <taxon>Lophotrochozoa</taxon>
        <taxon>Mollusca</taxon>
        <taxon>Gastropoda</taxon>
        <taxon>Caenogastropoda</taxon>
        <taxon>Neogastropoda</taxon>
        <taxon>Conoidea</taxon>
        <taxon>Conidae</taxon>
        <taxon>Conus</taxon>
        <taxon>Stephanoconus</taxon>
    </lineage>
</organism>